<organism>
    <name type="scientific">Solanum melongena</name>
    <name type="common">Eggplant</name>
    <name type="synonym">Aubergine</name>
    <dbReference type="NCBI Taxonomy" id="223891"/>
    <lineage>
        <taxon>Eukaryota</taxon>
        <taxon>Viridiplantae</taxon>
        <taxon>Streptophyta</taxon>
        <taxon>Embryophyta</taxon>
        <taxon>Tracheophyta</taxon>
        <taxon>Spermatophyta</taxon>
        <taxon>Magnoliopsida</taxon>
        <taxon>eudicotyledons</taxon>
        <taxon>Gunneridae</taxon>
        <taxon>Pentapetalae</taxon>
        <taxon>asterids</taxon>
        <taxon>lamiids</taxon>
        <taxon>Solanales</taxon>
        <taxon>Solanaceae</taxon>
        <taxon>Solanoideae</taxon>
        <taxon>Solaneae</taxon>
        <taxon>Solanum</taxon>
    </lineage>
</organism>
<keyword id="KW-0963">Cytoplasm</keyword>
<keyword id="KW-0539">Nucleus</keyword>
<keyword id="KW-0687">Ribonucleoprotein</keyword>
<keyword id="KW-0689">Ribosomal protein</keyword>
<dbReference type="EMBL" id="AB001583">
    <property type="protein sequence ID" value="BAA19415.1"/>
    <property type="molecule type" value="mRNA"/>
</dbReference>
<dbReference type="SMR" id="P93779"/>
<dbReference type="GO" id="GO:0022625">
    <property type="term" value="C:cytosolic large ribosomal subunit"/>
    <property type="evidence" value="ECO:0007669"/>
    <property type="project" value="TreeGrafter"/>
</dbReference>
<dbReference type="GO" id="GO:0005634">
    <property type="term" value="C:nucleus"/>
    <property type="evidence" value="ECO:0007669"/>
    <property type="project" value="UniProtKB-SubCell"/>
</dbReference>
<dbReference type="GO" id="GO:0008097">
    <property type="term" value="F:5S rRNA binding"/>
    <property type="evidence" value="ECO:0007669"/>
    <property type="project" value="InterPro"/>
</dbReference>
<dbReference type="GO" id="GO:0003735">
    <property type="term" value="F:structural constituent of ribosome"/>
    <property type="evidence" value="ECO:0007669"/>
    <property type="project" value="InterPro"/>
</dbReference>
<dbReference type="GO" id="GO:0000027">
    <property type="term" value="P:ribosomal large subunit assembly"/>
    <property type="evidence" value="ECO:0007669"/>
    <property type="project" value="TreeGrafter"/>
</dbReference>
<dbReference type="GO" id="GO:0006412">
    <property type="term" value="P:translation"/>
    <property type="evidence" value="ECO:0007669"/>
    <property type="project" value="InterPro"/>
</dbReference>
<dbReference type="Gene3D" id="3.30.420.100">
    <property type="match status" value="1"/>
</dbReference>
<dbReference type="InterPro" id="IPR005485">
    <property type="entry name" value="Rbsml_uL18_euk"/>
</dbReference>
<dbReference type="InterPro" id="IPR025607">
    <property type="entry name" value="Ribosomal_uL18_C_euk"/>
</dbReference>
<dbReference type="PANTHER" id="PTHR23410:SF36">
    <property type="entry name" value="LARGE RIBOSOMAL SUBUNIT PROTEIN UL18 C-TERMINAL EUKARYOTES DOMAIN-CONTAINING PROTEIN"/>
    <property type="match status" value="1"/>
</dbReference>
<dbReference type="PANTHER" id="PTHR23410">
    <property type="entry name" value="RIBOSOMAL PROTEIN L5-RELATED"/>
    <property type="match status" value="1"/>
</dbReference>
<dbReference type="Pfam" id="PF14204">
    <property type="entry name" value="Ribosomal_L18_c"/>
    <property type="match status" value="1"/>
</dbReference>
<dbReference type="SUPFAM" id="SSF53137">
    <property type="entry name" value="Translational machinery components"/>
    <property type="match status" value="1"/>
</dbReference>
<comment type="function">
    <text evidence="1">Component of the ribosome, a large ribonucleoprotein complex responsible for the synthesis of proteins in the cell. The small ribosomal subunit (SSU) binds messenger RNAs (mRNAs) and translates the encoded message by selecting cognate aminoacyl-transfer RNA (tRNA) molecules. The large subunit (LSU) contains the ribosomal catalytic site termed the peptidyl transferase center (PTC), which catalyzes the formation of peptide bonds, thereby polymerizing the amino acids delivered by tRNAs into a polypeptide chain. The nascent polypeptides leave the ribosome through a tunnel in the LSU and interact with protein factors that function in enzymatic processing, targeting, and the membrane insertion of nascent chains at the exit of the ribosomal tunnel.</text>
</comment>
<comment type="subunit">
    <text evidence="1">Component of the large ribosomal subunit (LSU).</text>
</comment>
<comment type="subcellular location">
    <subcellularLocation>
        <location evidence="1">Cytoplasm</location>
    </subcellularLocation>
    <subcellularLocation>
        <location evidence="1">Nucleus</location>
    </subcellularLocation>
</comment>
<comment type="similarity">
    <text evidence="3">Belongs to the universal ribosomal protein uL18 family.</text>
</comment>
<protein>
    <recommendedName>
        <fullName evidence="3">Large ribosomal subunit protein uL18</fullName>
    </recommendedName>
    <alternativeName>
        <fullName>60S ribosomal protein L5</fullName>
    </alternativeName>
</protein>
<proteinExistence type="evidence at transcript level"/>
<sequence length="121" mass="13980">SSKDSKQLDAEVHRKYIYGGHVAAYMNILMEDEPEKYQSHFSSYIKADLAPDNIEEMYKKVHAAIRPDPSPKKSQKQPPKTHKRYNLKKLTYEERKAKLIERLNALNAAGGNDDDDEEDDE</sequence>
<feature type="chain" id="PRO_0000131449" description="Large ribosomal subunit protein uL18">
    <location>
        <begin position="1" status="less than"/>
        <end position="121"/>
    </location>
</feature>
<feature type="region of interest" description="Disordered" evidence="2">
    <location>
        <begin position="63"/>
        <end position="88"/>
    </location>
</feature>
<feature type="compositionally biased region" description="Basic residues" evidence="2">
    <location>
        <begin position="73"/>
        <end position="87"/>
    </location>
</feature>
<feature type="non-terminal residue">
    <location>
        <position position="1"/>
    </location>
</feature>
<name>RL5_SOLME</name>
<evidence type="ECO:0000250" key="1">
    <source>
        <dbReference type="UniProtKB" id="P26321"/>
    </source>
</evidence>
<evidence type="ECO:0000256" key="2">
    <source>
        <dbReference type="SAM" id="MobiDB-lite"/>
    </source>
</evidence>
<evidence type="ECO:0000305" key="3"/>
<reference key="1">
    <citation type="submission" date="1997-03" db="EMBL/GenBank/DDBJ databases">
        <authorList>
            <person name="Momiyama T."/>
            <person name="Kayano T."/>
            <person name="Takaiwa F."/>
            <person name="Takayanagi K."/>
        </authorList>
    </citation>
    <scope>NUCLEOTIDE SEQUENCE [MRNA]</scope>
    <source>
        <tissue>Cotyledon</tissue>
    </source>
</reference>
<gene>
    <name type="primary">RPL5</name>
    <name type="synonym">TM003</name>
</gene>
<accession>P93779</accession>